<accession>B2S1T0</accession>
<protein>
    <recommendedName>
        <fullName evidence="1">V-type proton ATPase subunit E</fullName>
    </recommendedName>
    <alternativeName>
        <fullName evidence="1">V-ATPase subunit E</fullName>
    </alternativeName>
</protein>
<evidence type="ECO:0000255" key="1">
    <source>
        <dbReference type="HAMAP-Rule" id="MF_00311"/>
    </source>
</evidence>
<organism>
    <name type="scientific">Borrelia hermsii (strain HS1 / DAH)</name>
    <dbReference type="NCBI Taxonomy" id="314723"/>
    <lineage>
        <taxon>Bacteria</taxon>
        <taxon>Pseudomonadati</taxon>
        <taxon>Spirochaetota</taxon>
        <taxon>Spirochaetia</taxon>
        <taxon>Spirochaetales</taxon>
        <taxon>Borreliaceae</taxon>
        <taxon>Borrelia</taxon>
    </lineage>
</organism>
<dbReference type="EMBL" id="CP000048">
    <property type="protein sequence ID" value="AAX16617.1"/>
    <property type="molecule type" value="Genomic_DNA"/>
</dbReference>
<dbReference type="RefSeq" id="WP_012421874.1">
    <property type="nucleotide sequence ID" value="NZ_CP073136.1"/>
</dbReference>
<dbReference type="SMR" id="B2S1T0"/>
<dbReference type="KEGG" id="bhr:BH0096"/>
<dbReference type="HOGENOM" id="CLU_105793_0_1_12"/>
<dbReference type="Proteomes" id="UP000008834">
    <property type="component" value="Chromosome"/>
</dbReference>
<dbReference type="GO" id="GO:0033178">
    <property type="term" value="C:proton-transporting two-sector ATPase complex, catalytic domain"/>
    <property type="evidence" value="ECO:0007669"/>
    <property type="project" value="InterPro"/>
</dbReference>
<dbReference type="GO" id="GO:0005524">
    <property type="term" value="F:ATP binding"/>
    <property type="evidence" value="ECO:0007669"/>
    <property type="project" value="UniProtKB-UniRule"/>
</dbReference>
<dbReference type="GO" id="GO:0046933">
    <property type="term" value="F:proton-transporting ATP synthase activity, rotational mechanism"/>
    <property type="evidence" value="ECO:0007669"/>
    <property type="project" value="UniProtKB-UniRule"/>
</dbReference>
<dbReference type="GO" id="GO:0046961">
    <property type="term" value="F:proton-transporting ATPase activity, rotational mechanism"/>
    <property type="evidence" value="ECO:0007669"/>
    <property type="project" value="InterPro"/>
</dbReference>
<dbReference type="GO" id="GO:0042777">
    <property type="term" value="P:proton motive force-driven plasma membrane ATP synthesis"/>
    <property type="evidence" value="ECO:0007669"/>
    <property type="project" value="UniProtKB-UniRule"/>
</dbReference>
<dbReference type="HAMAP" id="MF_00311">
    <property type="entry name" value="ATP_synth_E_arch"/>
    <property type="match status" value="1"/>
</dbReference>
<dbReference type="InterPro" id="IPR002842">
    <property type="entry name" value="ATPase_V1_Esu"/>
</dbReference>
<dbReference type="NCBIfam" id="NF002424">
    <property type="entry name" value="PRK01558.1"/>
    <property type="match status" value="1"/>
</dbReference>
<feature type="chain" id="PRO_1000119527" description="V-type proton ATPase subunit E">
    <location>
        <begin position="1"/>
        <end position="198"/>
    </location>
</feature>
<reference key="1">
    <citation type="submission" date="2004-12" db="EMBL/GenBank/DDBJ databases">
        <title>The genome sequence of Borrelia hermsii and Borrelia turicatae: comparative analysis of two agents of endemic N. America relapsing fever.</title>
        <authorList>
            <person name="Porcella S.F."/>
            <person name="Raffel S.J."/>
            <person name="Schrumpf M.E."/>
            <person name="Montgomery B."/>
            <person name="Smith T."/>
            <person name="Schwan T.G."/>
        </authorList>
    </citation>
    <scope>NUCLEOTIDE SEQUENCE [LARGE SCALE GENOMIC DNA]</scope>
    <source>
        <strain>HS1 / DAH</strain>
    </source>
</reference>
<keyword id="KW-0066">ATP synthesis</keyword>
<keyword id="KW-0375">Hydrogen ion transport</keyword>
<keyword id="KW-0406">Ion transport</keyword>
<keyword id="KW-0813">Transport</keyword>
<name>VATE_BORHD</name>
<gene>
    <name evidence="1" type="primary">atpE</name>
    <name type="ordered locus">BH0096</name>
</gene>
<comment type="function">
    <text evidence="1">Produces ATP from ADP in the presence of a proton gradient across the membrane.</text>
</comment>
<comment type="similarity">
    <text evidence="1">Belongs to the V-ATPase E subunit family.</text>
</comment>
<sequence length="198" mass="22633">MQFEVKDLINKIKKDGLEEAEKLASEIILNAKRDAEAIILKAESDAKELKMQAEKEAGEYKIHSLEASRQAVRDLIIATENNIKSLFKIALKDSVSEVYDDNFLRELIIRVVDIWSKKDKIDIILNESAVSNLLSILRVNIGNRLDDAIELKPFKGISKGFKIQQRDGNLYYDFTSDTIADILFEYLNPRFKEVIKLG</sequence>
<proteinExistence type="inferred from homology"/>